<accession>D3H120</accession>
<organism>
    <name type="scientific">Escherichia coli O44:H18 (strain 042 / EAEC)</name>
    <dbReference type="NCBI Taxonomy" id="216592"/>
    <lineage>
        <taxon>Bacteria</taxon>
        <taxon>Pseudomonadati</taxon>
        <taxon>Pseudomonadota</taxon>
        <taxon>Gammaproteobacteria</taxon>
        <taxon>Enterobacterales</taxon>
        <taxon>Enterobacteriaceae</taxon>
        <taxon>Escherichia</taxon>
    </lineage>
</organism>
<name>RUTF_ECO44</name>
<comment type="function">
    <text evidence="1">Catalyzes the reduction of FMN to FMNH2 which is used to reduce pyrimidine by RutA via the Rut pathway.</text>
</comment>
<comment type="catalytic activity">
    <reaction evidence="1">
        <text>FMNH2 + NAD(+) = FMN + NADH + 2 H(+)</text>
        <dbReference type="Rhea" id="RHEA:21620"/>
        <dbReference type="ChEBI" id="CHEBI:15378"/>
        <dbReference type="ChEBI" id="CHEBI:57540"/>
        <dbReference type="ChEBI" id="CHEBI:57618"/>
        <dbReference type="ChEBI" id="CHEBI:57945"/>
        <dbReference type="ChEBI" id="CHEBI:58210"/>
        <dbReference type="EC" id="1.5.1.42"/>
    </reaction>
</comment>
<comment type="induction">
    <text evidence="1">Up-regulated by the nitrogen regulatory protein C (NtrC also called GlnG) and repressed by RutR.</text>
</comment>
<comment type="similarity">
    <text evidence="1">Belongs to the non-flavoprotein flavin reductase family. RutF subfamily.</text>
</comment>
<sequence length="164" mass="17747">MNIVDQQTFRDAMSCMGAAVNIITTDGPAGRAGFTASAVCSVTDTPPTLLVCLNRGASVWPVFNENRTLCVNTLSAGQEPLSNLFGGKTPMEHRFAAARWQTGVTGCPQLEEALVSFDCRISQVVSVGTHDILFCAIEAIHRHATPYGLVWFDRSYHALMRPAC</sequence>
<evidence type="ECO:0000255" key="1">
    <source>
        <dbReference type="HAMAP-Rule" id="MF_00833"/>
    </source>
</evidence>
<dbReference type="EC" id="1.5.1.42" evidence="1"/>
<dbReference type="EMBL" id="FN554766">
    <property type="protein sequence ID" value="CBG33904.1"/>
    <property type="molecule type" value="Genomic_DNA"/>
</dbReference>
<dbReference type="RefSeq" id="WP_001028095.1">
    <property type="nucleotide sequence ID" value="NZ_CP042934.2"/>
</dbReference>
<dbReference type="SMR" id="D3H120"/>
<dbReference type="GeneID" id="75171083"/>
<dbReference type="KEGG" id="elo:EC042_1082"/>
<dbReference type="PATRIC" id="fig|216592.3.peg.1120"/>
<dbReference type="HOGENOM" id="CLU_059021_2_2_6"/>
<dbReference type="Proteomes" id="UP000001407">
    <property type="component" value="Chromosome"/>
</dbReference>
<dbReference type="GO" id="GO:0010181">
    <property type="term" value="F:FMN binding"/>
    <property type="evidence" value="ECO:0007669"/>
    <property type="project" value="InterPro"/>
</dbReference>
<dbReference type="GO" id="GO:0052874">
    <property type="term" value="F:FMN reductase (NADH) activity"/>
    <property type="evidence" value="ECO:0007669"/>
    <property type="project" value="UniProtKB-EC"/>
</dbReference>
<dbReference type="GO" id="GO:0008752">
    <property type="term" value="F:FMN reductase [NAD(P)H] activity"/>
    <property type="evidence" value="ECO:0007669"/>
    <property type="project" value="InterPro"/>
</dbReference>
<dbReference type="GO" id="GO:0042602">
    <property type="term" value="F:riboflavin reductase (NADPH) activity"/>
    <property type="evidence" value="ECO:0007669"/>
    <property type="project" value="UniProtKB-UniRule"/>
</dbReference>
<dbReference type="GO" id="GO:0019740">
    <property type="term" value="P:nitrogen utilization"/>
    <property type="evidence" value="ECO:0007669"/>
    <property type="project" value="UniProtKB-UniRule"/>
</dbReference>
<dbReference type="GO" id="GO:0006212">
    <property type="term" value="P:uracil catabolic process"/>
    <property type="evidence" value="ECO:0007669"/>
    <property type="project" value="UniProtKB-UniRule"/>
</dbReference>
<dbReference type="FunFam" id="2.30.110.10:FF:000002">
    <property type="entry name" value="FMN reductase (NADH) RutF"/>
    <property type="match status" value="1"/>
</dbReference>
<dbReference type="Gene3D" id="2.30.110.10">
    <property type="entry name" value="Electron Transport, Fmn-binding Protein, Chain A"/>
    <property type="match status" value="1"/>
</dbReference>
<dbReference type="HAMAP" id="MF_00833">
    <property type="entry name" value="RutF"/>
    <property type="match status" value="1"/>
</dbReference>
<dbReference type="InterPro" id="IPR002563">
    <property type="entry name" value="Flavin_Rdtase-like_dom"/>
</dbReference>
<dbReference type="InterPro" id="IPR050268">
    <property type="entry name" value="NADH-dep_flavin_reductase"/>
</dbReference>
<dbReference type="InterPro" id="IPR019917">
    <property type="entry name" value="RutF"/>
</dbReference>
<dbReference type="InterPro" id="IPR012349">
    <property type="entry name" value="Split_barrel_FMN-bd"/>
</dbReference>
<dbReference type="NCBIfam" id="TIGR03615">
    <property type="entry name" value="RutF"/>
    <property type="match status" value="1"/>
</dbReference>
<dbReference type="PANTHER" id="PTHR30466">
    <property type="entry name" value="FLAVIN REDUCTASE"/>
    <property type="match status" value="1"/>
</dbReference>
<dbReference type="PANTHER" id="PTHR30466:SF1">
    <property type="entry name" value="FMN REDUCTASE (NADH) RUTF"/>
    <property type="match status" value="1"/>
</dbReference>
<dbReference type="Pfam" id="PF01613">
    <property type="entry name" value="Flavin_Reduct"/>
    <property type="match status" value="1"/>
</dbReference>
<dbReference type="SMART" id="SM00903">
    <property type="entry name" value="Flavin_Reduct"/>
    <property type="match status" value="1"/>
</dbReference>
<dbReference type="SUPFAM" id="SSF50475">
    <property type="entry name" value="FMN-binding split barrel"/>
    <property type="match status" value="1"/>
</dbReference>
<protein>
    <recommendedName>
        <fullName evidence="1">FMN reductase (NADH) RutF</fullName>
        <ecNumber evidence="1">1.5.1.42</ecNumber>
    </recommendedName>
    <alternativeName>
        <fullName evidence="1">FMN reductase</fullName>
    </alternativeName>
    <alternativeName>
        <fullName evidence="1">NADH-flavin reductase RutF</fullName>
    </alternativeName>
    <alternativeName>
        <fullName evidence="1">NADH:flavin oxidoreductase</fullName>
    </alternativeName>
</protein>
<feature type="chain" id="PRO_0000403019" description="FMN reductase (NADH) RutF">
    <location>
        <begin position="1"/>
        <end position="164"/>
    </location>
</feature>
<gene>
    <name evidence="1" type="primary">rutF</name>
    <name type="ordered locus">EC042_1082</name>
</gene>
<reference key="1">
    <citation type="journal article" date="2010" name="PLoS ONE">
        <title>Complete genome sequence and comparative metabolic profiling of the prototypical enteroaggregative Escherichia coli strain 042.</title>
        <authorList>
            <person name="Chaudhuri R.R."/>
            <person name="Sebaihia M."/>
            <person name="Hobman J.L."/>
            <person name="Webber M.A."/>
            <person name="Leyton D.L."/>
            <person name="Goldberg M.D."/>
            <person name="Cunningham A.F."/>
            <person name="Scott-Tucker A."/>
            <person name="Ferguson P.R."/>
            <person name="Thomas C.M."/>
            <person name="Frankel G."/>
            <person name="Tang C.M."/>
            <person name="Dudley E.G."/>
            <person name="Roberts I.S."/>
            <person name="Rasko D.A."/>
            <person name="Pallen M.J."/>
            <person name="Parkhill J."/>
            <person name="Nataro J.P."/>
            <person name="Thomson N.R."/>
            <person name="Henderson I.R."/>
        </authorList>
    </citation>
    <scope>NUCLEOTIDE SEQUENCE [LARGE SCALE GENOMIC DNA]</scope>
    <source>
        <strain>042 / EAEC</strain>
    </source>
</reference>
<proteinExistence type="inferred from homology"/>
<keyword id="KW-0285">Flavoprotein</keyword>
<keyword id="KW-0288">FMN</keyword>
<keyword id="KW-0520">NAD</keyword>
<keyword id="KW-0560">Oxidoreductase</keyword>